<accession>Q4K533</accession>
<keyword id="KW-0488">Methylation</keyword>
<keyword id="KW-0687">Ribonucleoprotein</keyword>
<keyword id="KW-0689">Ribosomal protein</keyword>
<keyword id="KW-0694">RNA-binding</keyword>
<keyword id="KW-0699">rRNA-binding</keyword>
<gene>
    <name evidence="1" type="primary">rplC</name>
    <name type="ordered locus">PFL_5582</name>
</gene>
<name>RL3_PSEF5</name>
<dbReference type="EMBL" id="CP000076">
    <property type="protein sequence ID" value="AAY94787.1"/>
    <property type="molecule type" value="Genomic_DNA"/>
</dbReference>
<dbReference type="RefSeq" id="WP_007924205.1">
    <property type="nucleotide sequence ID" value="NC_004129.6"/>
</dbReference>
<dbReference type="SMR" id="Q4K533"/>
<dbReference type="STRING" id="220664.PFL_5582"/>
<dbReference type="GeneID" id="93406148"/>
<dbReference type="KEGG" id="pfl:PFL_5582"/>
<dbReference type="eggNOG" id="COG0087">
    <property type="taxonomic scope" value="Bacteria"/>
</dbReference>
<dbReference type="HOGENOM" id="CLU_044142_4_1_6"/>
<dbReference type="Proteomes" id="UP000008540">
    <property type="component" value="Chromosome"/>
</dbReference>
<dbReference type="GO" id="GO:0022625">
    <property type="term" value="C:cytosolic large ribosomal subunit"/>
    <property type="evidence" value="ECO:0007669"/>
    <property type="project" value="TreeGrafter"/>
</dbReference>
<dbReference type="GO" id="GO:0019843">
    <property type="term" value="F:rRNA binding"/>
    <property type="evidence" value="ECO:0007669"/>
    <property type="project" value="UniProtKB-UniRule"/>
</dbReference>
<dbReference type="GO" id="GO:0003735">
    <property type="term" value="F:structural constituent of ribosome"/>
    <property type="evidence" value="ECO:0007669"/>
    <property type="project" value="InterPro"/>
</dbReference>
<dbReference type="GO" id="GO:0006412">
    <property type="term" value="P:translation"/>
    <property type="evidence" value="ECO:0007669"/>
    <property type="project" value="UniProtKB-UniRule"/>
</dbReference>
<dbReference type="FunFam" id="2.40.30.10:FF:000004">
    <property type="entry name" value="50S ribosomal protein L3"/>
    <property type="match status" value="1"/>
</dbReference>
<dbReference type="FunFam" id="3.30.160.810:FF:000001">
    <property type="entry name" value="50S ribosomal protein L3"/>
    <property type="match status" value="1"/>
</dbReference>
<dbReference type="Gene3D" id="3.30.160.810">
    <property type="match status" value="1"/>
</dbReference>
<dbReference type="Gene3D" id="2.40.30.10">
    <property type="entry name" value="Translation factors"/>
    <property type="match status" value="1"/>
</dbReference>
<dbReference type="HAMAP" id="MF_01325_B">
    <property type="entry name" value="Ribosomal_uL3_B"/>
    <property type="match status" value="1"/>
</dbReference>
<dbReference type="InterPro" id="IPR000597">
    <property type="entry name" value="Ribosomal_uL3"/>
</dbReference>
<dbReference type="InterPro" id="IPR019927">
    <property type="entry name" value="Ribosomal_uL3_bac/org-type"/>
</dbReference>
<dbReference type="InterPro" id="IPR019926">
    <property type="entry name" value="Ribosomal_uL3_CS"/>
</dbReference>
<dbReference type="InterPro" id="IPR009000">
    <property type="entry name" value="Transl_B-barrel_sf"/>
</dbReference>
<dbReference type="NCBIfam" id="TIGR03625">
    <property type="entry name" value="L3_bact"/>
    <property type="match status" value="1"/>
</dbReference>
<dbReference type="PANTHER" id="PTHR11229">
    <property type="entry name" value="50S RIBOSOMAL PROTEIN L3"/>
    <property type="match status" value="1"/>
</dbReference>
<dbReference type="PANTHER" id="PTHR11229:SF16">
    <property type="entry name" value="LARGE RIBOSOMAL SUBUNIT PROTEIN UL3C"/>
    <property type="match status" value="1"/>
</dbReference>
<dbReference type="Pfam" id="PF00297">
    <property type="entry name" value="Ribosomal_L3"/>
    <property type="match status" value="1"/>
</dbReference>
<dbReference type="SUPFAM" id="SSF50447">
    <property type="entry name" value="Translation proteins"/>
    <property type="match status" value="1"/>
</dbReference>
<dbReference type="PROSITE" id="PS00474">
    <property type="entry name" value="RIBOSOMAL_L3"/>
    <property type="match status" value="1"/>
</dbReference>
<proteinExistence type="inferred from homology"/>
<feature type="chain" id="PRO_0000241389" description="Large ribosomal subunit protein uL3">
    <location>
        <begin position="1"/>
        <end position="211"/>
    </location>
</feature>
<feature type="modified residue" description="N5-methylglutamine" evidence="1">
    <location>
        <position position="150"/>
    </location>
</feature>
<comment type="function">
    <text evidence="1">One of the primary rRNA binding proteins, it binds directly near the 3'-end of the 23S rRNA, where it nucleates assembly of the 50S subunit.</text>
</comment>
<comment type="subunit">
    <text evidence="1">Part of the 50S ribosomal subunit. Forms a cluster with proteins L14 and L19.</text>
</comment>
<comment type="PTM">
    <text evidence="1">Methylated by PrmB.</text>
</comment>
<comment type="similarity">
    <text evidence="1">Belongs to the universal ribosomal protein uL3 family.</text>
</comment>
<protein>
    <recommendedName>
        <fullName evidence="1">Large ribosomal subunit protein uL3</fullName>
    </recommendedName>
    <alternativeName>
        <fullName evidence="2">50S ribosomal protein L3</fullName>
    </alternativeName>
</protein>
<reference key="1">
    <citation type="journal article" date="2005" name="Nat. Biotechnol.">
        <title>Complete genome sequence of the plant commensal Pseudomonas fluorescens Pf-5.</title>
        <authorList>
            <person name="Paulsen I.T."/>
            <person name="Press C.M."/>
            <person name="Ravel J."/>
            <person name="Kobayashi D.Y."/>
            <person name="Myers G.S.A."/>
            <person name="Mavrodi D.V."/>
            <person name="DeBoy R.T."/>
            <person name="Seshadri R."/>
            <person name="Ren Q."/>
            <person name="Madupu R."/>
            <person name="Dodson R.J."/>
            <person name="Durkin A.S."/>
            <person name="Brinkac L.M."/>
            <person name="Daugherty S.C."/>
            <person name="Sullivan S.A."/>
            <person name="Rosovitz M.J."/>
            <person name="Gwinn M.L."/>
            <person name="Zhou L."/>
            <person name="Schneider D.J."/>
            <person name="Cartinhour S.W."/>
            <person name="Nelson W.C."/>
            <person name="Weidman J."/>
            <person name="Watkins K."/>
            <person name="Tran K."/>
            <person name="Khouri H."/>
            <person name="Pierson E.A."/>
            <person name="Pierson L.S. III"/>
            <person name="Thomashow L.S."/>
            <person name="Loper J.E."/>
        </authorList>
    </citation>
    <scope>NUCLEOTIDE SEQUENCE [LARGE SCALE GENOMIC DNA]</scope>
    <source>
        <strain>ATCC BAA-477 / NRRL B-23932 / Pf-5</strain>
    </source>
</reference>
<evidence type="ECO:0000255" key="1">
    <source>
        <dbReference type="HAMAP-Rule" id="MF_01325"/>
    </source>
</evidence>
<evidence type="ECO:0000305" key="2"/>
<organism>
    <name type="scientific">Pseudomonas fluorescens (strain ATCC BAA-477 / NRRL B-23932 / Pf-5)</name>
    <dbReference type="NCBI Taxonomy" id="220664"/>
    <lineage>
        <taxon>Bacteria</taxon>
        <taxon>Pseudomonadati</taxon>
        <taxon>Pseudomonadota</taxon>
        <taxon>Gammaproteobacteria</taxon>
        <taxon>Pseudomonadales</taxon>
        <taxon>Pseudomonadaceae</taxon>
        <taxon>Pseudomonas</taxon>
    </lineage>
</organism>
<sequence length="211" mass="22546">MTIGVVGRKCGMTRIFTEEGVSIPVTVIEIEPNRVTQFKTEETDGYRAVQVTVGERRASRVTAAQAGHFAKANVAAGRGVWEFRLEEGEYQAGDLINAEIFAAGQLVDVTGQSKGKGFAGTIKRWNFRGQDNTHGNSVSHRVPGSIGQCQTPGRVFKGKKMSGHMGAERVTVQSLEVVRVDAERNLLLVKGAVPGATGGNLVVRPAAKARG</sequence>